<keyword id="KW-0007">Acetylation</keyword>
<keyword id="KW-0963">Cytoplasm</keyword>
<keyword id="KW-0312">Gluconeogenesis</keyword>
<keyword id="KW-0324">Glycolysis</keyword>
<keyword id="KW-0413">Isomerase</keyword>
<keyword id="KW-1185">Reference proteome</keyword>
<gene>
    <name evidence="1" type="primary">pgi</name>
    <name type="ordered locus">SDY_4226</name>
</gene>
<organism>
    <name type="scientific">Shigella dysenteriae serotype 1 (strain Sd197)</name>
    <dbReference type="NCBI Taxonomy" id="300267"/>
    <lineage>
        <taxon>Bacteria</taxon>
        <taxon>Pseudomonadati</taxon>
        <taxon>Pseudomonadota</taxon>
        <taxon>Gammaproteobacteria</taxon>
        <taxon>Enterobacterales</taxon>
        <taxon>Enterobacteriaceae</taxon>
        <taxon>Shigella</taxon>
    </lineage>
</organism>
<name>G6PI_SHIDS</name>
<comment type="function">
    <text evidence="1">Catalyzes the reversible isomerization of glucose-6-phosphate to fructose-6-phosphate.</text>
</comment>
<comment type="catalytic activity">
    <reaction evidence="1">
        <text>alpha-D-glucose 6-phosphate = beta-D-fructose 6-phosphate</text>
        <dbReference type="Rhea" id="RHEA:11816"/>
        <dbReference type="ChEBI" id="CHEBI:57634"/>
        <dbReference type="ChEBI" id="CHEBI:58225"/>
        <dbReference type="EC" id="5.3.1.9"/>
    </reaction>
</comment>
<comment type="pathway">
    <text evidence="1">Carbohydrate biosynthesis; gluconeogenesis.</text>
</comment>
<comment type="pathway">
    <text evidence="1">Carbohydrate degradation; glycolysis; D-glyceraldehyde 3-phosphate and glycerone phosphate from D-glucose: step 2/4.</text>
</comment>
<comment type="subcellular location">
    <subcellularLocation>
        <location evidence="1">Cytoplasm</location>
    </subcellularLocation>
</comment>
<comment type="similarity">
    <text evidence="1">Belongs to the GPI family.</text>
</comment>
<dbReference type="EC" id="5.3.1.9" evidence="1"/>
<dbReference type="EMBL" id="CP000034">
    <property type="protein sequence ID" value="ABB64128.1"/>
    <property type="molecule type" value="Genomic_DNA"/>
</dbReference>
<dbReference type="RefSeq" id="WP_000789986.1">
    <property type="nucleotide sequence ID" value="NC_007606.1"/>
</dbReference>
<dbReference type="RefSeq" id="YP_405619.1">
    <property type="nucleotide sequence ID" value="NC_007606.1"/>
</dbReference>
<dbReference type="SMR" id="Q328X7"/>
<dbReference type="STRING" id="300267.SDY_4226"/>
<dbReference type="EnsemblBacteria" id="ABB64128">
    <property type="protein sequence ID" value="ABB64128"/>
    <property type="gene ID" value="SDY_4226"/>
</dbReference>
<dbReference type="GeneID" id="93777863"/>
<dbReference type="KEGG" id="sdy:SDY_4226"/>
<dbReference type="PATRIC" id="fig|300267.13.peg.4977"/>
<dbReference type="HOGENOM" id="CLU_017947_3_1_6"/>
<dbReference type="UniPathway" id="UPA00109">
    <property type="reaction ID" value="UER00181"/>
</dbReference>
<dbReference type="UniPathway" id="UPA00138"/>
<dbReference type="Proteomes" id="UP000002716">
    <property type="component" value="Chromosome"/>
</dbReference>
<dbReference type="GO" id="GO:0005829">
    <property type="term" value="C:cytosol"/>
    <property type="evidence" value="ECO:0007669"/>
    <property type="project" value="TreeGrafter"/>
</dbReference>
<dbReference type="GO" id="GO:0097367">
    <property type="term" value="F:carbohydrate derivative binding"/>
    <property type="evidence" value="ECO:0007669"/>
    <property type="project" value="InterPro"/>
</dbReference>
<dbReference type="GO" id="GO:0004347">
    <property type="term" value="F:glucose-6-phosphate isomerase activity"/>
    <property type="evidence" value="ECO:0007669"/>
    <property type="project" value="UniProtKB-UniRule"/>
</dbReference>
<dbReference type="GO" id="GO:0048029">
    <property type="term" value="F:monosaccharide binding"/>
    <property type="evidence" value="ECO:0007669"/>
    <property type="project" value="TreeGrafter"/>
</dbReference>
<dbReference type="GO" id="GO:0006094">
    <property type="term" value="P:gluconeogenesis"/>
    <property type="evidence" value="ECO:0007669"/>
    <property type="project" value="UniProtKB-UniRule"/>
</dbReference>
<dbReference type="GO" id="GO:0051156">
    <property type="term" value="P:glucose 6-phosphate metabolic process"/>
    <property type="evidence" value="ECO:0007669"/>
    <property type="project" value="TreeGrafter"/>
</dbReference>
<dbReference type="GO" id="GO:0006096">
    <property type="term" value="P:glycolytic process"/>
    <property type="evidence" value="ECO:0007669"/>
    <property type="project" value="UniProtKB-UniRule"/>
</dbReference>
<dbReference type="CDD" id="cd05015">
    <property type="entry name" value="SIS_PGI_1"/>
    <property type="match status" value="1"/>
</dbReference>
<dbReference type="CDD" id="cd05016">
    <property type="entry name" value="SIS_PGI_2"/>
    <property type="match status" value="1"/>
</dbReference>
<dbReference type="FunFam" id="1.10.1390.10:FF:000001">
    <property type="entry name" value="Glucose-6-phosphate isomerase"/>
    <property type="match status" value="1"/>
</dbReference>
<dbReference type="FunFam" id="3.40.50.10490:FF:000004">
    <property type="entry name" value="Glucose-6-phosphate isomerase"/>
    <property type="match status" value="1"/>
</dbReference>
<dbReference type="Gene3D" id="1.10.1390.10">
    <property type="match status" value="1"/>
</dbReference>
<dbReference type="Gene3D" id="3.40.50.10490">
    <property type="entry name" value="Glucose-6-phosphate isomerase like protein, domain 1"/>
    <property type="match status" value="2"/>
</dbReference>
<dbReference type="HAMAP" id="MF_00473">
    <property type="entry name" value="G6P_isomerase"/>
    <property type="match status" value="1"/>
</dbReference>
<dbReference type="InterPro" id="IPR001672">
    <property type="entry name" value="G6P_Isomerase"/>
</dbReference>
<dbReference type="InterPro" id="IPR023096">
    <property type="entry name" value="G6P_Isomerase_C"/>
</dbReference>
<dbReference type="InterPro" id="IPR018189">
    <property type="entry name" value="Phosphoglucose_isomerase_CS"/>
</dbReference>
<dbReference type="InterPro" id="IPR046348">
    <property type="entry name" value="SIS_dom_sf"/>
</dbReference>
<dbReference type="InterPro" id="IPR035476">
    <property type="entry name" value="SIS_PGI_1"/>
</dbReference>
<dbReference type="InterPro" id="IPR035482">
    <property type="entry name" value="SIS_PGI_2"/>
</dbReference>
<dbReference type="NCBIfam" id="NF001211">
    <property type="entry name" value="PRK00179.1"/>
    <property type="match status" value="1"/>
</dbReference>
<dbReference type="PANTHER" id="PTHR11469">
    <property type="entry name" value="GLUCOSE-6-PHOSPHATE ISOMERASE"/>
    <property type="match status" value="1"/>
</dbReference>
<dbReference type="PANTHER" id="PTHR11469:SF1">
    <property type="entry name" value="GLUCOSE-6-PHOSPHATE ISOMERASE"/>
    <property type="match status" value="1"/>
</dbReference>
<dbReference type="Pfam" id="PF00342">
    <property type="entry name" value="PGI"/>
    <property type="match status" value="1"/>
</dbReference>
<dbReference type="PRINTS" id="PR00662">
    <property type="entry name" value="G6PISOMERASE"/>
</dbReference>
<dbReference type="SUPFAM" id="SSF53697">
    <property type="entry name" value="SIS domain"/>
    <property type="match status" value="1"/>
</dbReference>
<dbReference type="PROSITE" id="PS00765">
    <property type="entry name" value="P_GLUCOSE_ISOMERASE_1"/>
    <property type="match status" value="1"/>
</dbReference>
<dbReference type="PROSITE" id="PS00174">
    <property type="entry name" value="P_GLUCOSE_ISOMERASE_2"/>
    <property type="match status" value="1"/>
</dbReference>
<dbReference type="PROSITE" id="PS51463">
    <property type="entry name" value="P_GLUCOSE_ISOMERASE_3"/>
    <property type="match status" value="1"/>
</dbReference>
<feature type="chain" id="PRO_0000230934" description="Glucose-6-phosphate isomerase">
    <location>
        <begin position="1"/>
        <end position="549"/>
    </location>
</feature>
<feature type="active site" description="Proton donor" evidence="1">
    <location>
        <position position="355"/>
    </location>
</feature>
<feature type="active site" evidence="1">
    <location>
        <position position="386"/>
    </location>
</feature>
<feature type="active site" evidence="1">
    <location>
        <position position="514"/>
    </location>
</feature>
<feature type="modified residue" description="N6-acetyllysine" evidence="1">
    <location>
        <position position="80"/>
    </location>
</feature>
<feature type="modified residue" description="N6-acetyllysine" evidence="1">
    <location>
        <position position="228"/>
    </location>
</feature>
<feature type="modified residue" description="N6-acetyllysine" evidence="1">
    <location>
        <position position="234"/>
    </location>
</feature>
<reference key="1">
    <citation type="journal article" date="2005" name="Nucleic Acids Res.">
        <title>Genome dynamics and diversity of Shigella species, the etiologic agents of bacillary dysentery.</title>
        <authorList>
            <person name="Yang F."/>
            <person name="Yang J."/>
            <person name="Zhang X."/>
            <person name="Chen L."/>
            <person name="Jiang Y."/>
            <person name="Yan Y."/>
            <person name="Tang X."/>
            <person name="Wang J."/>
            <person name="Xiong Z."/>
            <person name="Dong J."/>
            <person name="Xue Y."/>
            <person name="Zhu Y."/>
            <person name="Xu X."/>
            <person name="Sun L."/>
            <person name="Chen S."/>
            <person name="Nie H."/>
            <person name="Peng J."/>
            <person name="Xu J."/>
            <person name="Wang Y."/>
            <person name="Yuan Z."/>
            <person name="Wen Y."/>
            <person name="Yao Z."/>
            <person name="Shen Y."/>
            <person name="Qiang B."/>
            <person name="Hou Y."/>
            <person name="Yu J."/>
            <person name="Jin Q."/>
        </authorList>
    </citation>
    <scope>NUCLEOTIDE SEQUENCE [LARGE SCALE GENOMIC DNA]</scope>
    <source>
        <strain>Sd197</strain>
    </source>
</reference>
<proteinExistence type="inferred from homology"/>
<sequence>MKNINPTQTAAWQALQKHFDEMKDVTIADLFAKDGDRFSKFSATFDDQMLVDYSKNRITEETLAKLQDLAKECDLAGAIKSMFSGEKINRTENRAVLHVALRNRSNTPILVDGKDVMPEVNAVLEKMKTFSEAIISGEWKGYTGKAITDVVNIGIGGSDLGPYMVTEALRPYKNHLNMHFVSNVDGTHIAEVLKKVNPETTLFLVASKTFTTQETMTNAHSARDWFLKAAGDEKHVAKHFAALSTNAKAVGEFGIDTANMFEFWDWVGGRYSLWSAIGLSIVLSIGFDNFVELLSGAHAMDKHFSTTPAEKNLPVLLALIGIWYNNFFGAETEAILPYDQYMHRFAAYFQQGNMESNGKYVDRNGNVVDYQTGPIIWGEPGTNGQHAFYQLIHQGTKMVPCDFIAPAITHNPLSDHHQKLLSNFFAQTEALAFGKSREVVEQEYRDQGKDPATLDYVVPFKVFEGNRPTNSILLREITPFSLGALIALYEHKIFTQGVILNIFTFDQWGVELGKQLANRILPELKDDKEISSHDSSTNGLINRYKAWRG</sequence>
<accession>Q328X7</accession>
<evidence type="ECO:0000255" key="1">
    <source>
        <dbReference type="HAMAP-Rule" id="MF_00473"/>
    </source>
</evidence>
<protein>
    <recommendedName>
        <fullName evidence="1">Glucose-6-phosphate isomerase</fullName>
        <shortName evidence="1">GPI</shortName>
        <ecNumber evidence="1">5.3.1.9</ecNumber>
    </recommendedName>
    <alternativeName>
        <fullName evidence="1">Phosphoglucose isomerase</fullName>
        <shortName evidence="1">PGI</shortName>
    </alternativeName>
    <alternativeName>
        <fullName evidence="1">Phosphohexose isomerase</fullName>
        <shortName evidence="1">PHI</shortName>
    </alternativeName>
</protein>